<keyword id="KW-0963">Cytoplasm</keyword>
<keyword id="KW-0489">Methyltransferase</keyword>
<keyword id="KW-1185">Reference proteome</keyword>
<keyword id="KW-0694">RNA-binding</keyword>
<keyword id="KW-0698">rRNA processing</keyword>
<keyword id="KW-0949">S-adenosyl-L-methionine</keyword>
<keyword id="KW-0808">Transferase</keyword>
<accession>P39587</accession>
<reference key="1">
    <citation type="journal article" date="1993" name="Mol. Microbiol.">
        <title>Bacillus subtilis genome project: cloning and sequencing of the 97 kb region from 325 degrees to 333 degrees.</title>
        <authorList>
            <person name="Glaser P."/>
            <person name="Kunst F."/>
            <person name="Arnaud M."/>
            <person name="Coudart M.P."/>
            <person name="Gonzales W."/>
            <person name="Hullo M.-F."/>
            <person name="Ionescu M."/>
            <person name="Lubochinsky B."/>
            <person name="Marcelino L."/>
            <person name="Moszer I."/>
            <person name="Presecan E."/>
            <person name="Santana M."/>
            <person name="Schneider E."/>
            <person name="Schweizer J."/>
            <person name="Vertes A."/>
            <person name="Rapoport G."/>
            <person name="Danchin A."/>
        </authorList>
    </citation>
    <scope>NUCLEOTIDE SEQUENCE [GENOMIC DNA]</scope>
    <source>
        <strain>168</strain>
    </source>
</reference>
<reference key="2">
    <citation type="journal article" date="1997" name="Nature">
        <title>The complete genome sequence of the Gram-positive bacterium Bacillus subtilis.</title>
        <authorList>
            <person name="Kunst F."/>
            <person name="Ogasawara N."/>
            <person name="Moszer I."/>
            <person name="Albertini A.M."/>
            <person name="Alloni G."/>
            <person name="Azevedo V."/>
            <person name="Bertero M.G."/>
            <person name="Bessieres P."/>
            <person name="Bolotin A."/>
            <person name="Borchert S."/>
            <person name="Borriss R."/>
            <person name="Boursier L."/>
            <person name="Brans A."/>
            <person name="Braun M."/>
            <person name="Brignell S.C."/>
            <person name="Bron S."/>
            <person name="Brouillet S."/>
            <person name="Bruschi C.V."/>
            <person name="Caldwell B."/>
            <person name="Capuano V."/>
            <person name="Carter N.M."/>
            <person name="Choi S.-K."/>
            <person name="Codani J.-J."/>
            <person name="Connerton I.F."/>
            <person name="Cummings N.J."/>
            <person name="Daniel R.A."/>
            <person name="Denizot F."/>
            <person name="Devine K.M."/>
            <person name="Duesterhoeft A."/>
            <person name="Ehrlich S.D."/>
            <person name="Emmerson P.T."/>
            <person name="Entian K.-D."/>
            <person name="Errington J."/>
            <person name="Fabret C."/>
            <person name="Ferrari E."/>
            <person name="Foulger D."/>
            <person name="Fritz C."/>
            <person name="Fujita M."/>
            <person name="Fujita Y."/>
            <person name="Fuma S."/>
            <person name="Galizzi A."/>
            <person name="Galleron N."/>
            <person name="Ghim S.-Y."/>
            <person name="Glaser P."/>
            <person name="Goffeau A."/>
            <person name="Golightly E.J."/>
            <person name="Grandi G."/>
            <person name="Guiseppi G."/>
            <person name="Guy B.J."/>
            <person name="Haga K."/>
            <person name="Haiech J."/>
            <person name="Harwood C.R."/>
            <person name="Henaut A."/>
            <person name="Hilbert H."/>
            <person name="Holsappel S."/>
            <person name="Hosono S."/>
            <person name="Hullo M.-F."/>
            <person name="Itaya M."/>
            <person name="Jones L.-M."/>
            <person name="Joris B."/>
            <person name="Karamata D."/>
            <person name="Kasahara Y."/>
            <person name="Klaerr-Blanchard M."/>
            <person name="Klein C."/>
            <person name="Kobayashi Y."/>
            <person name="Koetter P."/>
            <person name="Koningstein G."/>
            <person name="Krogh S."/>
            <person name="Kumano M."/>
            <person name="Kurita K."/>
            <person name="Lapidus A."/>
            <person name="Lardinois S."/>
            <person name="Lauber J."/>
            <person name="Lazarevic V."/>
            <person name="Lee S.-M."/>
            <person name="Levine A."/>
            <person name="Liu H."/>
            <person name="Masuda S."/>
            <person name="Mauel C."/>
            <person name="Medigue C."/>
            <person name="Medina N."/>
            <person name="Mellado R.P."/>
            <person name="Mizuno M."/>
            <person name="Moestl D."/>
            <person name="Nakai S."/>
            <person name="Noback M."/>
            <person name="Noone D."/>
            <person name="O'Reilly M."/>
            <person name="Ogawa K."/>
            <person name="Ogiwara A."/>
            <person name="Oudega B."/>
            <person name="Park S.-H."/>
            <person name="Parro V."/>
            <person name="Pohl T.M."/>
            <person name="Portetelle D."/>
            <person name="Porwollik S."/>
            <person name="Prescott A.M."/>
            <person name="Presecan E."/>
            <person name="Pujic P."/>
            <person name="Purnelle B."/>
            <person name="Rapoport G."/>
            <person name="Rey M."/>
            <person name="Reynolds S."/>
            <person name="Rieger M."/>
            <person name="Rivolta C."/>
            <person name="Rocha E."/>
            <person name="Roche B."/>
            <person name="Rose M."/>
            <person name="Sadaie Y."/>
            <person name="Sato T."/>
            <person name="Scanlan E."/>
            <person name="Schleich S."/>
            <person name="Schroeter R."/>
            <person name="Scoffone F."/>
            <person name="Sekiguchi J."/>
            <person name="Sekowska A."/>
            <person name="Seror S.J."/>
            <person name="Serror P."/>
            <person name="Shin B.-S."/>
            <person name="Soldo B."/>
            <person name="Sorokin A."/>
            <person name="Tacconi E."/>
            <person name="Takagi T."/>
            <person name="Takahashi H."/>
            <person name="Takemaru K."/>
            <person name="Takeuchi M."/>
            <person name="Tamakoshi A."/>
            <person name="Tanaka T."/>
            <person name="Terpstra P."/>
            <person name="Tognoni A."/>
            <person name="Tosato V."/>
            <person name="Uchiyama S."/>
            <person name="Vandenbol M."/>
            <person name="Vannier F."/>
            <person name="Vassarotti A."/>
            <person name="Viari A."/>
            <person name="Wambutt R."/>
            <person name="Wedler E."/>
            <person name="Wedler H."/>
            <person name="Weitzenegger T."/>
            <person name="Winters P."/>
            <person name="Wipat A."/>
            <person name="Yamamoto H."/>
            <person name="Yamane K."/>
            <person name="Yasumoto K."/>
            <person name="Yata K."/>
            <person name="Yoshida K."/>
            <person name="Yoshikawa H.-F."/>
            <person name="Zumstein E."/>
            <person name="Yoshikawa H."/>
            <person name="Danchin A."/>
        </authorList>
    </citation>
    <scope>NUCLEOTIDE SEQUENCE [LARGE SCALE GENOMIC DNA]</scope>
    <source>
        <strain>168</strain>
    </source>
</reference>
<sequence length="396" mass="44444">MKLLTLKKAHAAKIKKGYPLIEKEALAGSAGHMKEGDLVDIVSESGGEFLARGYYGLQNKGVGWTLTRNKHEQIDQAFFLSKLTKAAQARAKLFEAQDTTAFRLFNGEGDGVGGVTIDYYDGYLLIQWYSKGIYTFKDMLISALDEMDLDYKAIYEKKRFDTAGQYVEDDDFVKGRRGEFPIIIQENGIQYAVDLNEGAMTGIFLDQRHVRKAIRDRYAKGKTVLNTFSYTGAFSVAAALGGAEKTTSVDVANRSLAKTIEQFSVNKLDYEAHDIKVMDVFNYFSYAAKKDLRFDLIILDPPSFARTKKRTFSAAKDYKNLLKETIAITADKGVIVASTNSSAFGMKKFKGFIDAAFKETNERYTIIEEFTLPEDFKTISAFPEGNYLKVVLLQKK</sequence>
<name>YWBD_BACSU</name>
<comment type="subcellular location">
    <subcellularLocation>
        <location evidence="2">Cytoplasm</location>
    </subcellularLocation>
</comment>
<comment type="similarity">
    <text evidence="2">Belongs to the methyltransferase superfamily. RlmI family.</text>
</comment>
<proteinExistence type="inferred from homology"/>
<gene>
    <name type="primary">ywbD</name>
    <name type="ordered locus">BSU38360</name>
    <name type="ORF">ipa-19d</name>
</gene>
<feature type="chain" id="PRO_0000213170" description="Putative ribosomal RNA large subunit methyltransferase YwbD">
    <location>
        <begin position="1"/>
        <end position="396"/>
    </location>
</feature>
<feature type="domain" description="PUA" evidence="1">
    <location>
        <begin position="1"/>
        <end position="79"/>
    </location>
</feature>
<dbReference type="EC" id="2.1.1.-"/>
<dbReference type="EMBL" id="X73124">
    <property type="protein sequence ID" value="CAA51575.1"/>
    <property type="molecule type" value="Genomic_DNA"/>
</dbReference>
<dbReference type="EMBL" id="AL009126">
    <property type="protein sequence ID" value="CAB15862.1"/>
    <property type="molecule type" value="Genomic_DNA"/>
</dbReference>
<dbReference type="PIR" id="S39674">
    <property type="entry name" value="S39674"/>
</dbReference>
<dbReference type="RefSeq" id="WP_003244593.1">
    <property type="nucleotide sequence ID" value="NZ_OZ025638.1"/>
</dbReference>
<dbReference type="SMR" id="P39587"/>
<dbReference type="FunCoup" id="P39587">
    <property type="interactions" value="282"/>
</dbReference>
<dbReference type="STRING" id="224308.BSU38360"/>
<dbReference type="PaxDb" id="224308-BSU38360"/>
<dbReference type="EnsemblBacteria" id="CAB15862">
    <property type="protein sequence ID" value="CAB15862"/>
    <property type="gene ID" value="BSU_38360"/>
</dbReference>
<dbReference type="GeneID" id="937328"/>
<dbReference type="KEGG" id="bsu:BSU38360"/>
<dbReference type="PATRIC" id="fig|224308.179.peg.4152"/>
<dbReference type="eggNOG" id="COG1092">
    <property type="taxonomic scope" value="Bacteria"/>
</dbReference>
<dbReference type="InParanoid" id="P39587"/>
<dbReference type="OrthoDB" id="9805492at2"/>
<dbReference type="PhylomeDB" id="P39587"/>
<dbReference type="BioCyc" id="BSUB:BSU38360-MONOMER"/>
<dbReference type="Proteomes" id="UP000001570">
    <property type="component" value="Chromosome"/>
</dbReference>
<dbReference type="GO" id="GO:0005737">
    <property type="term" value="C:cytoplasm"/>
    <property type="evidence" value="ECO:0007669"/>
    <property type="project" value="UniProtKB-SubCell"/>
</dbReference>
<dbReference type="GO" id="GO:0008168">
    <property type="term" value="F:methyltransferase activity"/>
    <property type="evidence" value="ECO:0007669"/>
    <property type="project" value="UniProtKB-KW"/>
</dbReference>
<dbReference type="GO" id="GO:0003723">
    <property type="term" value="F:RNA binding"/>
    <property type="evidence" value="ECO:0007669"/>
    <property type="project" value="UniProtKB-KW"/>
</dbReference>
<dbReference type="GO" id="GO:0032259">
    <property type="term" value="P:methylation"/>
    <property type="evidence" value="ECO:0007669"/>
    <property type="project" value="UniProtKB-KW"/>
</dbReference>
<dbReference type="GO" id="GO:0006364">
    <property type="term" value="P:rRNA processing"/>
    <property type="evidence" value="ECO:0007669"/>
    <property type="project" value="UniProtKB-KW"/>
</dbReference>
<dbReference type="CDD" id="cd02440">
    <property type="entry name" value="AdoMet_MTases"/>
    <property type="match status" value="1"/>
</dbReference>
<dbReference type="CDD" id="cd21153">
    <property type="entry name" value="PUA_RlmI"/>
    <property type="match status" value="1"/>
</dbReference>
<dbReference type="CDD" id="cd11572">
    <property type="entry name" value="RlmI_M_like"/>
    <property type="match status" value="1"/>
</dbReference>
<dbReference type="Gene3D" id="2.30.130.10">
    <property type="entry name" value="PUA domain"/>
    <property type="match status" value="1"/>
</dbReference>
<dbReference type="Gene3D" id="3.30.750.80">
    <property type="entry name" value="RNA methyltransferase domain (HRMD) like"/>
    <property type="match status" value="1"/>
</dbReference>
<dbReference type="Gene3D" id="3.40.50.150">
    <property type="entry name" value="Vaccinia Virus protein VP39"/>
    <property type="match status" value="1"/>
</dbReference>
<dbReference type="InterPro" id="IPR002478">
    <property type="entry name" value="PUA"/>
</dbReference>
<dbReference type="InterPro" id="IPR015947">
    <property type="entry name" value="PUA-like_sf"/>
</dbReference>
<dbReference type="InterPro" id="IPR036974">
    <property type="entry name" value="PUA_sf"/>
</dbReference>
<dbReference type="InterPro" id="IPR041532">
    <property type="entry name" value="RlmI-like_PUA"/>
</dbReference>
<dbReference type="InterPro" id="IPR019614">
    <property type="entry name" value="SAM-dep_methyl-trfase"/>
</dbReference>
<dbReference type="InterPro" id="IPR029063">
    <property type="entry name" value="SAM-dependent_MTases_sf"/>
</dbReference>
<dbReference type="PANTHER" id="PTHR43042:SF3">
    <property type="entry name" value="RIBOSOMAL RNA LARGE SUBUNIT METHYLTRANSFERASE YWBD-RELATED"/>
    <property type="match status" value="1"/>
</dbReference>
<dbReference type="PANTHER" id="PTHR43042">
    <property type="entry name" value="SAM-DEPENDENT METHYLTRANSFERASE"/>
    <property type="match status" value="1"/>
</dbReference>
<dbReference type="Pfam" id="PF10672">
    <property type="entry name" value="Methyltrans_SAM"/>
    <property type="match status" value="1"/>
</dbReference>
<dbReference type="Pfam" id="PF17785">
    <property type="entry name" value="PUA_3"/>
    <property type="match status" value="1"/>
</dbReference>
<dbReference type="SMART" id="SM00359">
    <property type="entry name" value="PUA"/>
    <property type="match status" value="1"/>
</dbReference>
<dbReference type="SUPFAM" id="SSF88697">
    <property type="entry name" value="PUA domain-like"/>
    <property type="match status" value="1"/>
</dbReference>
<dbReference type="SUPFAM" id="SSF53335">
    <property type="entry name" value="S-adenosyl-L-methionine-dependent methyltransferases"/>
    <property type="match status" value="1"/>
</dbReference>
<dbReference type="PROSITE" id="PS50890">
    <property type="entry name" value="PUA"/>
    <property type="match status" value="1"/>
</dbReference>
<organism>
    <name type="scientific">Bacillus subtilis (strain 168)</name>
    <dbReference type="NCBI Taxonomy" id="224308"/>
    <lineage>
        <taxon>Bacteria</taxon>
        <taxon>Bacillati</taxon>
        <taxon>Bacillota</taxon>
        <taxon>Bacilli</taxon>
        <taxon>Bacillales</taxon>
        <taxon>Bacillaceae</taxon>
        <taxon>Bacillus</taxon>
    </lineage>
</organism>
<evidence type="ECO:0000255" key="1">
    <source>
        <dbReference type="PROSITE-ProRule" id="PRU00161"/>
    </source>
</evidence>
<evidence type="ECO:0000305" key="2"/>
<protein>
    <recommendedName>
        <fullName>Putative ribosomal RNA large subunit methyltransferase YwbD</fullName>
        <ecNumber>2.1.1.-</ecNumber>
    </recommendedName>
</protein>